<sequence length="405" mass="46288">MDTAGMEHSVSWISSNSDELILRSWISSRMDIAELHRAGDDIKEMMKSEGYYSEPSKYEAELSDGNITFAYSYPIKAFEKFLGYYDRENRIAFNPSISMRTDFSFCLAACRYRKNGKTDTVVLDGYADNKYYKKAKFALDKFRSEYSINGSFDFYIKRYRRYQKAKGLSESSAVAAAVSRALISNVFGDDAAKDDIFVSRYARLVSGSGTRAAHDGISMWLSYPGMDSRDCVAFKVGKSNENLNYGVFPKYSDVATDNAHSIAVNSVFYGTWVSEKFSNVKRLISDHFDINDLLKIGENDMLRLNSILMSGGLIIQTPDSLRILKEILKFKSKNEGFYFTADTGPSIAIFSFDRSLIDEFRENVNDEYIEGSYDFKGYNNRMRDFIREAQEYFTQTPGEDEEDRL</sequence>
<reference key="1">
    <citation type="journal article" date="2000" name="Nature">
        <title>The genome sequence of the thermoacidophilic scavenger Thermoplasma acidophilum.</title>
        <authorList>
            <person name="Ruepp A."/>
            <person name="Graml W."/>
            <person name="Santos-Martinez M.-L."/>
            <person name="Koretke K.K."/>
            <person name="Volker C."/>
            <person name="Mewes H.-W."/>
            <person name="Frishman D."/>
            <person name="Stocker S."/>
            <person name="Lupas A.N."/>
            <person name="Baumeister W."/>
        </authorList>
    </citation>
    <scope>NUCLEOTIDE SEQUENCE [LARGE SCALE GENOMIC DNA]</scope>
    <source>
        <strain>ATCC 25905 / DSM 1728 / JCM 9062 / NBRC 15155 / AMRC-C165</strain>
    </source>
</reference>
<reference key="2">
    <citation type="journal article" date="2016" name="Sci. Rep.">
        <title>An adaptation to life in acid through a novel mevalonate pathway.</title>
        <authorList>
            <person name="Vinokur J.M."/>
            <person name="Cummins M.C."/>
            <person name="Korman T.P."/>
            <person name="Bowie J.U."/>
        </authorList>
    </citation>
    <scope>FUNCTION</scope>
    <scope>CATALYTIC ACTIVITY</scope>
    <scope>PATHWAY</scope>
    <scope>SUBUNIT</scope>
    <scope>IDENTIFICATION BY MASS SPECTROMETRY</scope>
</reference>
<dbReference type="EC" id="4.1.1.110" evidence="1"/>
<dbReference type="EMBL" id="AL445065">
    <property type="protein sequence ID" value="CAC12022.1"/>
    <property type="molecule type" value="Genomic_DNA"/>
</dbReference>
<dbReference type="RefSeq" id="WP_010901303.1">
    <property type="nucleotide sequence ID" value="NC_002578.1"/>
</dbReference>
<dbReference type="SMR" id="Q9HJS1"/>
<dbReference type="STRING" id="273075.gene:9572108"/>
<dbReference type="PaxDb" id="273075-Ta0893"/>
<dbReference type="DNASU" id="1456429"/>
<dbReference type="EnsemblBacteria" id="CAC12022">
    <property type="protein sequence ID" value="CAC12022"/>
    <property type="gene ID" value="CAC12022"/>
</dbReference>
<dbReference type="KEGG" id="tac:Ta0893"/>
<dbReference type="eggNOG" id="arCOG02937">
    <property type="taxonomic scope" value="Archaea"/>
</dbReference>
<dbReference type="HOGENOM" id="CLU_743187_0_0_2"/>
<dbReference type="InParanoid" id="Q9HJS1"/>
<dbReference type="OrthoDB" id="56800at2157"/>
<dbReference type="BioCyc" id="MetaCyc:MONOMER-20539"/>
<dbReference type="BRENDA" id="4.1.1.110">
    <property type="organism ID" value="6324"/>
</dbReference>
<dbReference type="UniPathway" id="UPA00057"/>
<dbReference type="Proteomes" id="UP000001024">
    <property type="component" value="Chromosome"/>
</dbReference>
<dbReference type="GO" id="GO:0016831">
    <property type="term" value="F:carboxy-lyase activity"/>
    <property type="evidence" value="ECO:0007669"/>
    <property type="project" value="InterPro"/>
</dbReference>
<dbReference type="GO" id="GO:0019287">
    <property type="term" value="P:isopentenyl diphosphate biosynthetic process, mevalonate pathway"/>
    <property type="evidence" value="ECO:0007669"/>
    <property type="project" value="UniProtKB-UniPathway"/>
</dbReference>
<dbReference type="Gene3D" id="3.30.230.10">
    <property type="match status" value="1"/>
</dbReference>
<dbReference type="Gene3D" id="3.30.70.890">
    <property type="entry name" value="GHMP kinase, C-terminal domain"/>
    <property type="match status" value="1"/>
</dbReference>
<dbReference type="InterPro" id="IPR036554">
    <property type="entry name" value="GHMP_kinase_C_sf"/>
</dbReference>
<dbReference type="InterPro" id="IPR005935">
    <property type="entry name" value="Mev_decarb"/>
</dbReference>
<dbReference type="InterPro" id="IPR053859">
    <property type="entry name" value="MVD-like_N"/>
</dbReference>
<dbReference type="InterPro" id="IPR053464">
    <property type="entry name" value="MVD_Decarboxylase"/>
</dbReference>
<dbReference type="InterPro" id="IPR020568">
    <property type="entry name" value="Ribosomal_Su5_D2-typ_SF"/>
</dbReference>
<dbReference type="InterPro" id="IPR014721">
    <property type="entry name" value="Ribsml_uS5_D2-typ_fold_subgr"/>
</dbReference>
<dbReference type="NCBIfam" id="NF040847">
    <property type="entry name" value="mev_decarb"/>
    <property type="match status" value="1"/>
</dbReference>
<dbReference type="PANTHER" id="PTHR10977">
    <property type="entry name" value="DIPHOSPHOMEVALONATE DECARBOXYLASE"/>
    <property type="match status" value="1"/>
</dbReference>
<dbReference type="PANTHER" id="PTHR10977:SF3">
    <property type="entry name" value="DIPHOSPHOMEVALONATE DECARBOXYLASE"/>
    <property type="match status" value="1"/>
</dbReference>
<dbReference type="Pfam" id="PF22700">
    <property type="entry name" value="MVD-like_N"/>
    <property type="match status" value="1"/>
</dbReference>
<dbReference type="PIRSF" id="PIRSF015950">
    <property type="entry name" value="Mev_P_decrbx"/>
    <property type="match status" value="1"/>
</dbReference>
<dbReference type="SUPFAM" id="SSF55060">
    <property type="entry name" value="GHMP Kinase, C-terminal domain"/>
    <property type="match status" value="1"/>
</dbReference>
<dbReference type="SUPFAM" id="SSF54211">
    <property type="entry name" value="Ribosomal protein S5 domain 2-like"/>
    <property type="match status" value="1"/>
</dbReference>
<feature type="chain" id="PRO_0000444883" description="Mevalonate 3,5-bisphosphate decarboxylase">
    <location>
        <begin position="1"/>
        <end position="405"/>
    </location>
</feature>
<organism>
    <name type="scientific">Thermoplasma acidophilum (strain ATCC 25905 / DSM 1728 / JCM 9062 / NBRC 15155 / AMRC-C165)</name>
    <dbReference type="NCBI Taxonomy" id="273075"/>
    <lineage>
        <taxon>Archaea</taxon>
        <taxon>Methanobacteriati</taxon>
        <taxon>Thermoplasmatota</taxon>
        <taxon>Thermoplasmata</taxon>
        <taxon>Thermoplasmatales</taxon>
        <taxon>Thermoplasmataceae</taxon>
        <taxon>Thermoplasma</taxon>
    </lineage>
</organism>
<proteinExistence type="evidence at protein level"/>
<accession>Q9HJS1</accession>
<gene>
    <name evidence="5" type="ordered locus">Ta0893</name>
</gene>
<protein>
    <recommendedName>
        <fullName evidence="2">Mevalonate 3,5-bisphosphate decarboxylase</fullName>
        <shortName evidence="2">MBD</shortName>
        <ecNumber evidence="1">4.1.1.110</ecNumber>
    </recommendedName>
    <alternativeName>
        <fullName evidence="3">Bisphosphomevalonate decarboxylase</fullName>
    </alternativeName>
</protein>
<name>MBD_THEAC</name>
<comment type="function">
    <text evidence="1">Catalyzes the ATP-independent decarboxylation of (R)-mevalonate 3,5-bisphosphate to isopentenyl phosphate. Functions in an alternative mevalonate pathway, only present in extreme acidophiles of the Thermoplasmatales order, which passes through mevalonate 3-phosphate rather than mevalonate 5-phosphate.</text>
</comment>
<comment type="catalytic activity">
    <reaction evidence="1">
        <text>(R)-3,5-bisphosphomevalonate + H(+) = isopentenyl phosphate + phosphate + CO2</text>
        <dbReference type="Rhea" id="RHEA:56500"/>
        <dbReference type="ChEBI" id="CHEBI:15378"/>
        <dbReference type="ChEBI" id="CHEBI:16526"/>
        <dbReference type="ChEBI" id="CHEBI:43474"/>
        <dbReference type="ChEBI" id="CHEBI:65078"/>
        <dbReference type="ChEBI" id="CHEBI:82774"/>
        <dbReference type="EC" id="4.1.1.110"/>
    </reaction>
</comment>
<comment type="pathway">
    <text evidence="4">Isoprenoid biosynthesis; isopentenyl diphosphate biosynthesis via mevalonate pathway.</text>
</comment>
<comment type="subunit">
    <text evidence="1">Homodimer.</text>
</comment>
<comment type="miscellaneous">
    <text evidence="4">It is proposed that Thermoplasmatales adapted the classical archaeal mevalonate pathway by replacing mevalonate 5-phosphate decarboxylase (MMD) with two specialized enzymes (mevalonate-3-phosphate 5-kinase and mevalonate 3,5-bisphosphate decarboxylase) in order to produce isoprenoids in extremely acidic environments. It was found that at low pH, the dual function enzyme MMD is unable to carry out the first phosphorylation step, yet retains its ability to perform decarboxylation.</text>
</comment>
<comment type="similarity">
    <text evidence="3">Belongs to the mevalonate 3,5-bisphosphate decarboxylase family.</text>
</comment>
<evidence type="ECO:0000269" key="1">
    <source>
    </source>
</evidence>
<evidence type="ECO:0000303" key="2">
    <source>
    </source>
</evidence>
<evidence type="ECO:0000305" key="3"/>
<evidence type="ECO:0000305" key="4">
    <source>
    </source>
</evidence>
<evidence type="ECO:0000312" key="5">
    <source>
        <dbReference type="EMBL" id="CAC12022.1"/>
    </source>
</evidence>
<keyword id="KW-0414">Isoprene biosynthesis</keyword>
<keyword id="KW-0444">Lipid biosynthesis</keyword>
<keyword id="KW-0443">Lipid metabolism</keyword>
<keyword id="KW-0456">Lyase</keyword>
<keyword id="KW-1185">Reference proteome</keyword>